<reference evidence="4" key="1">
    <citation type="journal article" date="2002" name="Curr. Microbiol.">
        <title>Urate oxidase from the rust Puccinia recondita is a heterotetramer with two different-sized monomers.</title>
        <authorList>
            <person name="Aguilar M."/>
            <person name="Montalbini P."/>
            <person name="Pineda M."/>
        </authorList>
    </citation>
    <scope>PROTEIN SEQUENCE</scope>
    <scope>FUNCTION</scope>
    <scope>CATALYTIC ACTIVITY</scope>
    <scope>ACTIVITY REGULATION</scope>
    <scope>BIOPHYSICOCHEMICAL PROPERTIES</scope>
    <scope>SUBUNIT</scope>
    <source>
        <tissue evidence="2">Spore</tissue>
    </source>
</reference>
<sequence length="8" mass="777">APFSLATA</sequence>
<dbReference type="EC" id="1.7.3.3"/>
<dbReference type="UniPathway" id="UPA00394">
    <property type="reaction ID" value="UER00650"/>
</dbReference>
<dbReference type="GO" id="GO:0004846">
    <property type="term" value="F:urate oxidase activity"/>
    <property type="evidence" value="ECO:0000314"/>
    <property type="project" value="UniProtKB"/>
</dbReference>
<dbReference type="GO" id="GO:0006144">
    <property type="term" value="P:purine nucleobase metabolic process"/>
    <property type="evidence" value="ECO:0000314"/>
    <property type="project" value="UniProtKB"/>
</dbReference>
<dbReference type="GO" id="GO:0019628">
    <property type="term" value="P:urate catabolic process"/>
    <property type="evidence" value="ECO:0007669"/>
    <property type="project" value="UniProtKB-UniPathway"/>
</dbReference>
<protein>
    <recommendedName>
        <fullName>Uricase</fullName>
        <ecNumber>1.7.3.3</ecNumber>
    </recommendedName>
    <alternativeName>
        <fullName>Urate oxidase</fullName>
    </alternativeName>
</protein>
<keyword id="KW-0903">Direct protein sequencing</keyword>
<keyword id="KW-0560">Oxidoreductase</keyword>
<keyword id="KW-0659">Purine metabolism</keyword>
<organism>
    <name type="scientific">Puccinia recondita f. sp. triseti</name>
    <dbReference type="NCBI Taxonomy" id="142679"/>
    <lineage>
        <taxon>Eukaryota</taxon>
        <taxon>Fungi</taxon>
        <taxon>Dikarya</taxon>
        <taxon>Basidiomycota</taxon>
        <taxon>Pucciniomycotina</taxon>
        <taxon>Pucciniomycetes</taxon>
        <taxon>Pucciniales</taxon>
        <taxon>Pucciniaceae</taxon>
        <taxon>Puccinia</taxon>
    </lineage>
</organism>
<feature type="chain" id="PRO_0000262767" description="Uricase">
    <location>
        <begin position="1"/>
        <end position="8" status="greater than"/>
    </location>
</feature>
<feature type="active site" description="Charge relay system" evidence="1">
    <location>
        <position position="7"/>
    </location>
</feature>
<feature type="binding site" evidence="1">
    <location>
        <position position="7"/>
    </location>
    <ligand>
        <name>urate</name>
        <dbReference type="ChEBI" id="CHEBI:17775"/>
    </ligand>
</feature>
<feature type="non-terminal residue" evidence="3">
    <location>
        <position position="8"/>
    </location>
</feature>
<proteinExistence type="evidence at protein level"/>
<comment type="function">
    <text evidence="2">Catalyzes the oxidation of uric acid to 5-hydroxyisourate, which spontaneously decomposes to form allantoin.</text>
</comment>
<comment type="catalytic activity">
    <reaction evidence="2">
        <text>urate + O2 + H2O = 5-hydroxyisourate + H2O2</text>
        <dbReference type="Rhea" id="RHEA:21368"/>
        <dbReference type="ChEBI" id="CHEBI:15377"/>
        <dbReference type="ChEBI" id="CHEBI:15379"/>
        <dbReference type="ChEBI" id="CHEBI:16240"/>
        <dbReference type="ChEBI" id="CHEBI:17775"/>
        <dbReference type="ChEBI" id="CHEBI:18072"/>
        <dbReference type="EC" id="1.7.3.3"/>
    </reaction>
</comment>
<comment type="activity regulation">
    <text evidence="2">Inhibited by two structural analogs of urate, oxonate and xanthine.</text>
</comment>
<comment type="biophysicochemical properties">
    <kinetics>
        <KM evidence="2">35 uM for Urate</KM>
    </kinetics>
    <phDependence>
        <text evidence="2">Optimum pH is 9.0.</text>
    </phDependence>
</comment>
<comment type="pathway">
    <text>Purine metabolism; urate degradation; (S)-allantoin from urate: step 1/3.</text>
</comment>
<comment type="subunit">
    <text evidence="2">Heterotetramer.</text>
</comment>
<comment type="similarity">
    <text evidence="2">Belongs to the uricase family.</text>
</comment>
<evidence type="ECO:0000250" key="1">
    <source>
        <dbReference type="UniProtKB" id="Q00511"/>
    </source>
</evidence>
<evidence type="ECO:0000269" key="2">
    <source>
    </source>
</evidence>
<evidence type="ECO:0000303" key="3">
    <source>
    </source>
</evidence>
<evidence type="ECO:0000305" key="4"/>
<name>URIC_PUCRE</name>
<accession>P82858</accession>